<gene>
    <name type="primary">lsrA</name>
    <name type="ordered locus">SPA3917</name>
</gene>
<feature type="chain" id="PRO_0000351301" description="Autoinducer 2 import ATP-binding protein LsrA">
    <location>
        <begin position="1"/>
        <end position="511"/>
    </location>
</feature>
<feature type="domain" description="ABC transporter 1" evidence="2">
    <location>
        <begin position="12"/>
        <end position="240"/>
    </location>
</feature>
<feature type="domain" description="ABC transporter 2" evidence="2">
    <location>
        <begin position="263"/>
        <end position="503"/>
    </location>
</feature>
<feature type="binding site" evidence="2">
    <location>
        <begin position="44"/>
        <end position="51"/>
    </location>
    <ligand>
        <name>ATP</name>
        <dbReference type="ChEBI" id="CHEBI:30616"/>
    </ligand>
</feature>
<reference key="1">
    <citation type="journal article" date="2004" name="Nat. Genet.">
        <title>Comparison of genome degradation in Paratyphi A and Typhi, human-restricted serovars of Salmonella enterica that cause typhoid.</title>
        <authorList>
            <person name="McClelland M."/>
            <person name="Sanderson K.E."/>
            <person name="Clifton S.W."/>
            <person name="Latreille P."/>
            <person name="Porwollik S."/>
            <person name="Sabo A."/>
            <person name="Meyer R."/>
            <person name="Bieri T."/>
            <person name="Ozersky P."/>
            <person name="McLellan M."/>
            <person name="Harkins C.R."/>
            <person name="Wang C."/>
            <person name="Nguyen C."/>
            <person name="Berghoff A."/>
            <person name="Elliott G."/>
            <person name="Kohlberg S."/>
            <person name="Strong C."/>
            <person name="Du F."/>
            <person name="Carter J."/>
            <person name="Kremizki C."/>
            <person name="Layman D."/>
            <person name="Leonard S."/>
            <person name="Sun H."/>
            <person name="Fulton L."/>
            <person name="Nash W."/>
            <person name="Miner T."/>
            <person name="Minx P."/>
            <person name="Delehaunty K."/>
            <person name="Fronick C."/>
            <person name="Magrini V."/>
            <person name="Nhan M."/>
            <person name="Warren W."/>
            <person name="Florea L."/>
            <person name="Spieth J."/>
            <person name="Wilson R.K."/>
        </authorList>
    </citation>
    <scope>NUCLEOTIDE SEQUENCE [LARGE SCALE GENOMIC DNA]</scope>
    <source>
        <strain>ATCC 9150 / SARB42</strain>
    </source>
</reference>
<name>LSRA_SALPA</name>
<accession>Q5PJE7</accession>
<proteinExistence type="inferred from homology"/>
<evidence type="ECO:0000250" key="1">
    <source>
        <dbReference type="UniProtKB" id="P77257"/>
    </source>
</evidence>
<evidence type="ECO:0000255" key="2">
    <source>
        <dbReference type="PROSITE-ProRule" id="PRU00434"/>
    </source>
</evidence>
<evidence type="ECO:0000305" key="3"/>
<dbReference type="EC" id="7.6.2.13" evidence="1"/>
<dbReference type="EMBL" id="CP000026">
    <property type="protein sequence ID" value="AAV79682.1"/>
    <property type="molecule type" value="Genomic_DNA"/>
</dbReference>
<dbReference type="RefSeq" id="WP_001167248.1">
    <property type="nucleotide sequence ID" value="NC_006511.1"/>
</dbReference>
<dbReference type="SMR" id="Q5PJE7"/>
<dbReference type="KEGG" id="spt:SPA3917"/>
<dbReference type="HOGENOM" id="CLU_000604_92_3_6"/>
<dbReference type="Proteomes" id="UP000008185">
    <property type="component" value="Chromosome"/>
</dbReference>
<dbReference type="GO" id="GO:0005886">
    <property type="term" value="C:plasma membrane"/>
    <property type="evidence" value="ECO:0007669"/>
    <property type="project" value="UniProtKB-SubCell"/>
</dbReference>
<dbReference type="GO" id="GO:0005524">
    <property type="term" value="F:ATP binding"/>
    <property type="evidence" value="ECO:0007669"/>
    <property type="project" value="UniProtKB-KW"/>
</dbReference>
<dbReference type="GO" id="GO:0016887">
    <property type="term" value="F:ATP hydrolysis activity"/>
    <property type="evidence" value="ECO:0007669"/>
    <property type="project" value="InterPro"/>
</dbReference>
<dbReference type="CDD" id="cd03216">
    <property type="entry name" value="ABC_Carb_Monos_I"/>
    <property type="match status" value="1"/>
</dbReference>
<dbReference type="CDD" id="cd03215">
    <property type="entry name" value="ABC_Carb_Monos_II"/>
    <property type="match status" value="1"/>
</dbReference>
<dbReference type="Gene3D" id="3.40.50.300">
    <property type="entry name" value="P-loop containing nucleotide triphosphate hydrolases"/>
    <property type="match status" value="2"/>
</dbReference>
<dbReference type="InterPro" id="IPR003593">
    <property type="entry name" value="AAA+_ATPase"/>
</dbReference>
<dbReference type="InterPro" id="IPR050107">
    <property type="entry name" value="ABC_carbohydrate_import_ATPase"/>
</dbReference>
<dbReference type="InterPro" id="IPR003439">
    <property type="entry name" value="ABC_transporter-like_ATP-bd"/>
</dbReference>
<dbReference type="InterPro" id="IPR017871">
    <property type="entry name" value="ABC_transporter-like_CS"/>
</dbReference>
<dbReference type="InterPro" id="IPR027417">
    <property type="entry name" value="P-loop_NTPase"/>
</dbReference>
<dbReference type="NCBIfam" id="NF011967">
    <property type="entry name" value="PRK15439.1"/>
    <property type="match status" value="1"/>
</dbReference>
<dbReference type="PANTHER" id="PTHR43790:SF2">
    <property type="entry name" value="AUTOINDUCER 2 IMPORT ATP-BINDING PROTEIN LSRA"/>
    <property type="match status" value="1"/>
</dbReference>
<dbReference type="PANTHER" id="PTHR43790">
    <property type="entry name" value="CARBOHYDRATE TRANSPORT ATP-BINDING PROTEIN MG119-RELATED"/>
    <property type="match status" value="1"/>
</dbReference>
<dbReference type="Pfam" id="PF00005">
    <property type="entry name" value="ABC_tran"/>
    <property type="match status" value="2"/>
</dbReference>
<dbReference type="SMART" id="SM00382">
    <property type="entry name" value="AAA"/>
    <property type="match status" value="2"/>
</dbReference>
<dbReference type="SUPFAM" id="SSF52540">
    <property type="entry name" value="P-loop containing nucleoside triphosphate hydrolases"/>
    <property type="match status" value="2"/>
</dbReference>
<dbReference type="PROSITE" id="PS00211">
    <property type="entry name" value="ABC_TRANSPORTER_1"/>
    <property type="match status" value="1"/>
</dbReference>
<dbReference type="PROSITE" id="PS50893">
    <property type="entry name" value="ABC_TRANSPORTER_2"/>
    <property type="match status" value="2"/>
</dbReference>
<keyword id="KW-0067">ATP-binding</keyword>
<keyword id="KW-0997">Cell inner membrane</keyword>
<keyword id="KW-1003">Cell membrane</keyword>
<keyword id="KW-0472">Membrane</keyword>
<keyword id="KW-0547">Nucleotide-binding</keyword>
<keyword id="KW-0677">Repeat</keyword>
<keyword id="KW-1278">Translocase</keyword>
<keyword id="KW-0813">Transport</keyword>
<comment type="function">
    <text evidence="1">Part of the ABC transporter complex LsrABCD involved in autoinducer 2 (AI-2) import. Responsible for energy coupling to the transport system.</text>
</comment>
<comment type="catalytic activity">
    <reaction evidence="1">
        <text>ATP + H2O + (2R,4S)-2-methyl-2,3,3,4-tetrahydroxytetrahydrofuran-[AI-2-binding protein]Side 1 = ADP + phosphate + (2R,4S)-2-methyl-2,3,3,4-tetrahydroxytetrahydrofuranSide 2 + [AI-2-binding protein]Side 1.</text>
        <dbReference type="EC" id="7.6.2.13"/>
    </reaction>
</comment>
<comment type="subunit">
    <text evidence="1">The complex is composed of two ATP-binding proteins (LsrA), two transmembrane proteins (LsrC and LsrD) and a solute-binding protein (LsrB).</text>
</comment>
<comment type="subcellular location">
    <subcellularLocation>
        <location evidence="1">Cell inner membrane</location>
        <topology evidence="1">Peripheral membrane protein</topology>
    </subcellularLocation>
</comment>
<comment type="similarity">
    <text evidence="3">Belongs to the ABC transporter superfamily. AI-2 autoinducer porter (TC 3.A.1.2.8) family.</text>
</comment>
<organism>
    <name type="scientific">Salmonella paratyphi A (strain ATCC 9150 / SARB42)</name>
    <dbReference type="NCBI Taxonomy" id="295319"/>
    <lineage>
        <taxon>Bacteria</taxon>
        <taxon>Pseudomonadati</taxon>
        <taxon>Pseudomonadota</taxon>
        <taxon>Gammaproteobacteria</taxon>
        <taxon>Enterobacterales</taxon>
        <taxon>Enterobacteriaceae</taxon>
        <taxon>Salmonella</taxon>
    </lineage>
</organism>
<protein>
    <recommendedName>
        <fullName evidence="1">Autoinducer 2 import ATP-binding protein LsrA</fullName>
        <shortName evidence="1">AI-2 import ATP-binding protein LsrA</shortName>
        <ecNumber evidence="1">7.6.2.13</ecNumber>
    </recommendedName>
</protein>
<sequence length="511" mass="55518">MQISHNTASPLICVQNIYKSYSGVEVLKGIDFTLHAGEVHALLGGNGAGKSTLMKIIAGIVPPDGGTIDIAGVRCSHLTPLKAHQYGIYLVPQEPLLFPSLSVRENILFGLQGRQASTEKMQQLLKAMGCQLDPASAAGTLDVADRQIVEIMRGLMRDSRILILDEPTASLTPAETDRLFTRLQELLKKGVGIVFISHKLPEIRQLAHCVSVMRDGKIALFGKTHDLSTDEIIQAITPATQGVSLSANQKLWLELPGSRPQNERGATVLALESLTGEGFMNINLEVRAGEILGLAGLVGAGRTELAETLYGIRPVNAGRMLFNGEEINALTTQQRLQLGLVYLPEDRQSSGLYLDASLAWNVCSLTHNQKGFWIKPQRDNATLERYHRALNIKLNNAEQAARTLSGGNQQKVLIAKCLEASPQLLIVDEPTRGVDVSARSDIYQLLRSIAQQNVAVLFISSDLEEIEQMADRVYVMHQGELGGPALCGEEINVDTIMHVAFGEHGASEATC</sequence>